<evidence type="ECO:0000250" key="1"/>
<evidence type="ECO:0000305" key="2"/>
<comment type="catalytic activity">
    <reaction>
        <text>an aromatic L-alpha-amino acid + 2-oxoglutarate = an aromatic oxo-acid + L-glutamate</text>
        <dbReference type="Rhea" id="RHEA:17533"/>
        <dbReference type="ChEBI" id="CHEBI:16810"/>
        <dbReference type="ChEBI" id="CHEBI:29985"/>
        <dbReference type="ChEBI" id="CHEBI:73309"/>
        <dbReference type="ChEBI" id="CHEBI:84824"/>
        <dbReference type="EC" id="2.6.1.57"/>
    </reaction>
</comment>
<comment type="cofactor">
    <cofactor>
        <name>pyridoxal 5'-phosphate</name>
        <dbReference type="ChEBI" id="CHEBI:597326"/>
    </cofactor>
</comment>
<comment type="subunit">
    <text evidence="1">Homodimer.</text>
</comment>
<comment type="subcellular location">
    <subcellularLocation>
        <location>Cytoplasm</location>
    </subcellularLocation>
</comment>
<comment type="similarity">
    <text evidence="2">Belongs to the class-I pyridoxal-phosphate-dependent aminotransferase family.</text>
</comment>
<accession>P43336</accession>
<keyword id="KW-0028">Amino-acid biosynthesis</keyword>
<keyword id="KW-0032">Aminotransferase</keyword>
<keyword id="KW-0057">Aromatic amino acid biosynthesis</keyword>
<keyword id="KW-0963">Cytoplasm</keyword>
<keyword id="KW-0663">Pyridoxal phosphate</keyword>
<keyword id="KW-1185">Reference proteome</keyword>
<keyword id="KW-0808">Transferase</keyword>
<protein>
    <recommendedName>
        <fullName>Aromatic-amino-acid aminotransferase</fullName>
        <ecNumber>2.6.1.57</ecNumber>
    </recommendedName>
</protein>
<proteinExistence type="inferred from homology"/>
<gene>
    <name type="primary">phhC</name>
    <name type="ordered locus">PA0870</name>
</gene>
<reference key="1">
    <citation type="journal article" date="1994" name="Proc. Natl. Acad. Sci. U.S.A.">
        <title>Pseudomonas aeruginosa possesses homologues of mammalian phenylalanine hydroxylase and 4 alpha-carbinolamine dehydratase/DCoH as part of a three-component gene cluster.</title>
        <authorList>
            <person name="Zhao G."/>
            <person name="Xia T."/>
            <person name="Song J."/>
            <person name="Roy R.A."/>
        </authorList>
    </citation>
    <scope>NUCLEOTIDE SEQUENCE [GENOMIC DNA]</scope>
    <source>
        <strain>ATCC 15692 / DSM 22644 / CIP 104116 / JCM 14847 / LMG 12228 / 1C / PRS 101 / PAO1</strain>
    </source>
</reference>
<reference key="2">
    <citation type="journal article" date="2000" name="Nature">
        <title>Complete genome sequence of Pseudomonas aeruginosa PAO1, an opportunistic pathogen.</title>
        <authorList>
            <person name="Stover C.K."/>
            <person name="Pham X.-Q.T."/>
            <person name="Erwin A.L."/>
            <person name="Mizoguchi S.D."/>
            <person name="Warrener P."/>
            <person name="Hickey M.J."/>
            <person name="Brinkman F.S.L."/>
            <person name="Hufnagle W.O."/>
            <person name="Kowalik D.J."/>
            <person name="Lagrou M."/>
            <person name="Garber R.L."/>
            <person name="Goltry L."/>
            <person name="Tolentino E."/>
            <person name="Westbrock-Wadman S."/>
            <person name="Yuan Y."/>
            <person name="Brody L.L."/>
            <person name="Coulter S.N."/>
            <person name="Folger K.R."/>
            <person name="Kas A."/>
            <person name="Larbig K."/>
            <person name="Lim R.M."/>
            <person name="Smith K.A."/>
            <person name="Spencer D.H."/>
            <person name="Wong G.K.-S."/>
            <person name="Wu Z."/>
            <person name="Paulsen I.T."/>
            <person name="Reizer J."/>
            <person name="Saier M.H. Jr."/>
            <person name="Hancock R.E.W."/>
            <person name="Lory S."/>
            <person name="Olson M.V."/>
        </authorList>
    </citation>
    <scope>NUCLEOTIDE SEQUENCE [LARGE SCALE GENOMIC DNA]</scope>
    <source>
        <strain>ATCC 15692 / DSM 22644 / CIP 104116 / JCM 14847 / LMG 12228 / 1C / PRS 101 / PAO1</strain>
    </source>
</reference>
<feature type="chain" id="PRO_0000123895" description="Aromatic-amino-acid aminotransferase">
    <location>
        <begin position="1"/>
        <end position="399"/>
    </location>
</feature>
<feature type="binding site" evidence="1">
    <location>
        <position position="36"/>
    </location>
    <ligand>
        <name>substrate</name>
    </ligand>
</feature>
<feature type="binding site" evidence="1">
    <location>
        <position position="67"/>
    </location>
    <ligand>
        <name>substrate</name>
    </ligand>
</feature>
<feature type="binding site" evidence="1">
    <location>
        <position position="132"/>
    </location>
    <ligand>
        <name>substrate</name>
    </ligand>
</feature>
<feature type="binding site" evidence="1">
    <location>
        <position position="184"/>
    </location>
    <ligand>
        <name>substrate</name>
    </ligand>
</feature>
<feature type="binding site" evidence="1">
    <location>
        <position position="375"/>
    </location>
    <ligand>
        <name>substrate</name>
    </ligand>
</feature>
<feature type="modified residue" description="N6-(pyridoxal phosphate)lysine" evidence="1">
    <location>
        <position position="247"/>
    </location>
</feature>
<feature type="sequence conflict" description="In Ref. 1; AAA25938." evidence="2" ref="1">
    <original>D</original>
    <variation>H</variation>
    <location>
        <position position="382"/>
    </location>
</feature>
<feature type="sequence conflict" description="In Ref. 1; AAA25938." evidence="2" ref="1">
    <original>D</original>
    <variation>G</variation>
    <location>
        <position position="387"/>
    </location>
</feature>
<sequence length="399" mass="43273">MSHFAKVARVPGDPILGLLDAYRNDPRADKLDLGVGVYKDAQGLTPILRSVKLAEQRLVEQETTKSYVGGHGDALFAARLAELALGAASPLLLEQRADATQTPGGTGALRLAGDFIAHCLPGRGIWLSDPTWPIHETLFAAAGLKVSHYPYVSADNRLDVEAMLAGLERIPQGDVVLLHACCHNPTGFDLSHDDWRRVLDVVRRRELLPLIDFAYQGFGDGLEEDAWAVRLFAGELPEVLVTSSCSKNFGLYRDRVGALIVCAQNAEKLTDLRSQLAFLARNLWSTPPAHGAEVVAAILGDSELKGLWQEEVEGMRSRIASLRIGLVEALAPHGLAERFAHVGAQRGMFSYTGLSPQQVARLRDEHAVYLVSSGRANVAGLDARRLDRLAQAIAQVCAD</sequence>
<name>PHHC_PSEAE</name>
<dbReference type="EC" id="2.6.1.57"/>
<dbReference type="EMBL" id="M88627">
    <property type="protein sequence ID" value="AAA25938.1"/>
    <property type="molecule type" value="Genomic_DNA"/>
</dbReference>
<dbReference type="EMBL" id="AE004091">
    <property type="protein sequence ID" value="AAG04259.1"/>
    <property type="molecule type" value="Genomic_DNA"/>
</dbReference>
<dbReference type="PIR" id="D83535">
    <property type="entry name" value="D83535"/>
</dbReference>
<dbReference type="RefSeq" id="NP_249561.1">
    <property type="nucleotide sequence ID" value="NC_002516.2"/>
</dbReference>
<dbReference type="RefSeq" id="WP_003114240.1">
    <property type="nucleotide sequence ID" value="NZ_QZGE01000007.1"/>
</dbReference>
<dbReference type="SMR" id="P43336"/>
<dbReference type="STRING" id="208964.PA0870"/>
<dbReference type="PaxDb" id="208964-PA0870"/>
<dbReference type="DNASU" id="880839"/>
<dbReference type="GeneID" id="880839"/>
<dbReference type="KEGG" id="pae:PA0870"/>
<dbReference type="PATRIC" id="fig|208964.12.peg.904"/>
<dbReference type="PseudoCAP" id="PA0870"/>
<dbReference type="HOGENOM" id="CLU_032440_0_1_6"/>
<dbReference type="InParanoid" id="P43336"/>
<dbReference type="OrthoDB" id="9766445at2"/>
<dbReference type="PhylomeDB" id="P43336"/>
<dbReference type="BioCyc" id="MetaCyc:MONOMER-12023"/>
<dbReference type="BioCyc" id="PAER208964:G1FZ6-885-MONOMER"/>
<dbReference type="Proteomes" id="UP000002438">
    <property type="component" value="Chromosome"/>
</dbReference>
<dbReference type="GO" id="GO:0005829">
    <property type="term" value="C:cytosol"/>
    <property type="evidence" value="ECO:0000318"/>
    <property type="project" value="GO_Central"/>
</dbReference>
<dbReference type="GO" id="GO:0042802">
    <property type="term" value="F:identical protein binding"/>
    <property type="evidence" value="ECO:0000318"/>
    <property type="project" value="GO_Central"/>
</dbReference>
<dbReference type="GO" id="GO:0004069">
    <property type="term" value="F:L-aspartate:2-oxoglutarate aminotransferase activity"/>
    <property type="evidence" value="ECO:0000318"/>
    <property type="project" value="GO_Central"/>
</dbReference>
<dbReference type="GO" id="GO:0004838">
    <property type="term" value="F:L-tyrosine-2-oxoglutarate transaminase activity"/>
    <property type="evidence" value="ECO:0000318"/>
    <property type="project" value="GO_Central"/>
</dbReference>
<dbReference type="GO" id="GO:0030170">
    <property type="term" value="F:pyridoxal phosphate binding"/>
    <property type="evidence" value="ECO:0000318"/>
    <property type="project" value="GO_Central"/>
</dbReference>
<dbReference type="GO" id="GO:0033585">
    <property type="term" value="P:L-phenylalanine biosynthetic process from chorismate via phenylpyruvate"/>
    <property type="evidence" value="ECO:0000318"/>
    <property type="project" value="GO_Central"/>
</dbReference>
<dbReference type="GO" id="GO:0006572">
    <property type="term" value="P:tyrosine catabolic process"/>
    <property type="evidence" value="ECO:0000315"/>
    <property type="project" value="CACAO"/>
</dbReference>
<dbReference type="CDD" id="cd00609">
    <property type="entry name" value="AAT_like"/>
    <property type="match status" value="1"/>
</dbReference>
<dbReference type="FunFam" id="3.40.640.10:FF:000066">
    <property type="entry name" value="Aspartate aminotransferase"/>
    <property type="match status" value="1"/>
</dbReference>
<dbReference type="Gene3D" id="3.90.1150.10">
    <property type="entry name" value="Aspartate Aminotransferase, domain 1"/>
    <property type="match status" value="1"/>
</dbReference>
<dbReference type="Gene3D" id="3.40.640.10">
    <property type="entry name" value="Type I PLP-dependent aspartate aminotransferase-like (Major domain)"/>
    <property type="match status" value="1"/>
</dbReference>
<dbReference type="InterPro" id="IPR004839">
    <property type="entry name" value="Aminotransferase_I/II_large"/>
</dbReference>
<dbReference type="InterPro" id="IPR000796">
    <property type="entry name" value="Asp_trans"/>
</dbReference>
<dbReference type="InterPro" id="IPR004838">
    <property type="entry name" value="NHTrfase_class1_PyrdxlP-BS"/>
</dbReference>
<dbReference type="InterPro" id="IPR015424">
    <property type="entry name" value="PyrdxlP-dep_Trfase"/>
</dbReference>
<dbReference type="InterPro" id="IPR015421">
    <property type="entry name" value="PyrdxlP-dep_Trfase_major"/>
</dbReference>
<dbReference type="InterPro" id="IPR015422">
    <property type="entry name" value="PyrdxlP-dep_Trfase_small"/>
</dbReference>
<dbReference type="NCBIfam" id="NF006719">
    <property type="entry name" value="PRK09257.1"/>
    <property type="match status" value="1"/>
</dbReference>
<dbReference type="PANTHER" id="PTHR11879">
    <property type="entry name" value="ASPARTATE AMINOTRANSFERASE"/>
    <property type="match status" value="1"/>
</dbReference>
<dbReference type="PANTHER" id="PTHR11879:SF22">
    <property type="entry name" value="ASPARTATE AMINOTRANSFERASE, MITOCHONDRIAL"/>
    <property type="match status" value="1"/>
</dbReference>
<dbReference type="Pfam" id="PF00155">
    <property type="entry name" value="Aminotran_1_2"/>
    <property type="match status" value="1"/>
</dbReference>
<dbReference type="PRINTS" id="PR00799">
    <property type="entry name" value="TRANSAMINASE"/>
</dbReference>
<dbReference type="SUPFAM" id="SSF53383">
    <property type="entry name" value="PLP-dependent transferases"/>
    <property type="match status" value="1"/>
</dbReference>
<dbReference type="PROSITE" id="PS00105">
    <property type="entry name" value="AA_TRANSFER_CLASS_1"/>
    <property type="match status" value="1"/>
</dbReference>
<organism>
    <name type="scientific">Pseudomonas aeruginosa (strain ATCC 15692 / DSM 22644 / CIP 104116 / JCM 14847 / LMG 12228 / 1C / PRS 101 / PAO1)</name>
    <dbReference type="NCBI Taxonomy" id="208964"/>
    <lineage>
        <taxon>Bacteria</taxon>
        <taxon>Pseudomonadati</taxon>
        <taxon>Pseudomonadota</taxon>
        <taxon>Gammaproteobacteria</taxon>
        <taxon>Pseudomonadales</taxon>
        <taxon>Pseudomonadaceae</taxon>
        <taxon>Pseudomonas</taxon>
    </lineage>
</organism>